<sequence length="162" mass="19547">MRLCGLLIFLSYIVYVDNAVTANFISDPRSMFPKMVRTKNAFHFLQYFMGTFRRMFRNKTEMIEHFNYYDDQVKGTDCHIQEELDFARFKSYFDRYTRTHYNPEIRIIFAIMTKDSSHMTVEFHVTSQSWFGFEDHFHMIIRAVNDENVGWGVRYLSMAFNC</sequence>
<feature type="signal peptide" evidence="1">
    <location>
        <begin position="1"/>
        <end position="21"/>
    </location>
</feature>
<feature type="chain" id="PRO_0000014276" description="Uncharacterized protein C28H8.2">
    <location>
        <begin position="22"/>
        <end position="162"/>
    </location>
</feature>
<gene>
    <name type="ORF">C28H8.2</name>
</gene>
<reference key="1">
    <citation type="journal article" date="1998" name="Science">
        <title>Genome sequence of the nematode C. elegans: a platform for investigating biology.</title>
        <authorList>
            <consortium name="The C. elegans sequencing consortium"/>
        </authorList>
    </citation>
    <scope>NUCLEOTIDE SEQUENCE [LARGE SCALE GENOMIC DNA]</scope>
    <source>
        <strain>Bristol N2</strain>
    </source>
</reference>
<keyword id="KW-1185">Reference proteome</keyword>
<keyword id="KW-0732">Signal</keyword>
<organism>
    <name type="scientific">Caenorhabditis elegans</name>
    <dbReference type="NCBI Taxonomy" id="6239"/>
    <lineage>
        <taxon>Eukaryota</taxon>
        <taxon>Metazoa</taxon>
        <taxon>Ecdysozoa</taxon>
        <taxon>Nematoda</taxon>
        <taxon>Chromadorea</taxon>
        <taxon>Rhabditida</taxon>
        <taxon>Rhabditina</taxon>
        <taxon>Rhabditomorpha</taxon>
        <taxon>Rhabditoidea</taxon>
        <taxon>Rhabditidae</taxon>
        <taxon>Peloderinae</taxon>
        <taxon>Caenorhabditis</taxon>
    </lineage>
</organism>
<proteinExistence type="inferred from homology"/>
<name>YP92_CAEEL</name>
<evidence type="ECO:0000255" key="1"/>
<protein>
    <recommendedName>
        <fullName>Uncharacterized protein C28H8.2</fullName>
    </recommendedName>
</protein>
<accession>Q09243</accession>
<dbReference type="EMBL" id="FO080703">
    <property type="protein sequence ID" value="CCD65962.1"/>
    <property type="molecule type" value="Genomic_DNA"/>
</dbReference>
<dbReference type="PIR" id="C88470">
    <property type="entry name" value="C88470"/>
</dbReference>
<dbReference type="RefSeq" id="NP_001382286.1">
    <property type="nucleotide sequence ID" value="NM_001395335.1"/>
</dbReference>
<dbReference type="RefSeq" id="NP_498285.2">
    <property type="nucleotide sequence ID" value="NM_065884.6"/>
</dbReference>
<dbReference type="FunCoup" id="Q09243">
    <property type="interactions" value="381"/>
</dbReference>
<dbReference type="STRING" id="6239.C28H8.2.1"/>
<dbReference type="PaxDb" id="6239-C28H8.2"/>
<dbReference type="EnsemblMetazoa" id="C28H8.2.1">
    <property type="protein sequence ID" value="C28H8.2.1"/>
    <property type="gene ID" value="WBGene00016193"/>
</dbReference>
<dbReference type="EnsemblMetazoa" id="C28H8.2.2">
    <property type="protein sequence ID" value="C28H8.2.2"/>
    <property type="gene ID" value="WBGene00016193"/>
</dbReference>
<dbReference type="GeneID" id="182995"/>
<dbReference type="UCSC" id="C28H8.2">
    <property type="organism name" value="c. elegans"/>
</dbReference>
<dbReference type="AGR" id="WB:WBGene00016193"/>
<dbReference type="WormBase" id="C28H8.2">
    <property type="protein sequence ID" value="CE32812"/>
    <property type="gene ID" value="WBGene00016193"/>
</dbReference>
<dbReference type="eggNOG" id="ENOG502THTY">
    <property type="taxonomic scope" value="Eukaryota"/>
</dbReference>
<dbReference type="HOGENOM" id="CLU_139347_0_0_1"/>
<dbReference type="InParanoid" id="Q09243"/>
<dbReference type="OMA" id="GFEDHFH"/>
<dbReference type="OrthoDB" id="5771465at2759"/>
<dbReference type="PRO" id="PR:Q09243"/>
<dbReference type="Proteomes" id="UP000001940">
    <property type="component" value="Chromosome III"/>
</dbReference>
<dbReference type="Bgee" id="WBGene00016193">
    <property type="expression patterns" value="Expressed in adult organism and 3 other cell types or tissues"/>
</dbReference>
<dbReference type="InterPro" id="IPR035334">
    <property type="entry name" value="DUF5390"/>
</dbReference>
<dbReference type="Pfam" id="PF17365">
    <property type="entry name" value="DUF5390"/>
    <property type="match status" value="1"/>
</dbReference>